<comment type="function">
    <text evidence="1">Catalyzes the hydrolytic cleavage of the carbon-nitrogen bond in imidazolone-5-propanoate to yield N-formimidoyl-L-glutamate. It is the third step in the universal histidine degradation pathway.</text>
</comment>
<comment type="catalytic activity">
    <reaction evidence="1">
        <text>4-imidazolone-5-propanoate + H2O = N-formimidoyl-L-glutamate</text>
        <dbReference type="Rhea" id="RHEA:23660"/>
        <dbReference type="ChEBI" id="CHEBI:15377"/>
        <dbReference type="ChEBI" id="CHEBI:58928"/>
        <dbReference type="ChEBI" id="CHEBI:77893"/>
        <dbReference type="EC" id="3.5.2.7"/>
    </reaction>
</comment>
<comment type="cofactor">
    <cofactor evidence="1">
        <name>Zn(2+)</name>
        <dbReference type="ChEBI" id="CHEBI:29105"/>
    </cofactor>
    <cofactor evidence="1">
        <name>Fe(3+)</name>
        <dbReference type="ChEBI" id="CHEBI:29034"/>
    </cofactor>
    <text evidence="1">Binds 1 zinc or iron ion per subunit.</text>
</comment>
<comment type="pathway">
    <text evidence="1">Amino-acid degradation; L-histidine degradation into L-glutamate; N-formimidoyl-L-glutamate from L-histidine: step 3/3.</text>
</comment>
<comment type="subcellular location">
    <subcellularLocation>
        <location evidence="1">Cytoplasm</location>
    </subcellularLocation>
</comment>
<comment type="similarity">
    <text evidence="1">Belongs to the metallo-dependent hydrolases superfamily. HutI family.</text>
</comment>
<evidence type="ECO:0000255" key="1">
    <source>
        <dbReference type="HAMAP-Rule" id="MF_00372"/>
    </source>
</evidence>
<keyword id="KW-0963">Cytoplasm</keyword>
<keyword id="KW-0369">Histidine metabolism</keyword>
<keyword id="KW-0378">Hydrolase</keyword>
<keyword id="KW-0408">Iron</keyword>
<keyword id="KW-0479">Metal-binding</keyword>
<keyword id="KW-1185">Reference proteome</keyword>
<keyword id="KW-0862">Zinc</keyword>
<organism>
    <name type="scientific">Shewanella baltica (strain OS155 / ATCC BAA-1091)</name>
    <dbReference type="NCBI Taxonomy" id="325240"/>
    <lineage>
        <taxon>Bacteria</taxon>
        <taxon>Pseudomonadati</taxon>
        <taxon>Pseudomonadota</taxon>
        <taxon>Gammaproteobacteria</taxon>
        <taxon>Alteromonadales</taxon>
        <taxon>Shewanellaceae</taxon>
        <taxon>Shewanella</taxon>
    </lineage>
</organism>
<sequence length="408" mass="43946">MSWDQVWIDVNLATMDPSISAPYGAITNAAIAVKDGKIAWLGPRSELPAFDVLSIPVYRGKGGWITPGLIDAHTHLIFAGNRANEFELRLQGASYEEIARSGGGIISTVKACREADEAELFELGRQRLNALAKEGVTTVEIKSGYGLDTETELKILRVARELGKHHHVDVKTTFLGAHAIPPEYKDNSDGYVDLIINKMLPAVIAENLADAVDVFCENIAFNLEQTERVLSAAKAAGLEIKLHAEQLTNMGGSALAARLGAKSVDHIEYLDEAGVKALSESGTCAVLLPGAFYFLRETQKPPVDLLRQYGVPMVLASDFNPGSSPICSTLLMLNMGCTLFRLTPEEALTGLTLNAAKALGIEDNVGSLVVGKQADFCLWDIVTPAQLAYSYGVNPCKDVVKNGKLVHQ</sequence>
<feature type="chain" id="PRO_1000007147" description="Imidazolonepropionase">
    <location>
        <begin position="1"/>
        <end position="408"/>
    </location>
</feature>
<feature type="binding site" evidence="1">
    <location>
        <position position="73"/>
    </location>
    <ligand>
        <name>Fe(3+)</name>
        <dbReference type="ChEBI" id="CHEBI:29034"/>
    </ligand>
</feature>
<feature type="binding site" evidence="1">
    <location>
        <position position="73"/>
    </location>
    <ligand>
        <name>Zn(2+)</name>
        <dbReference type="ChEBI" id="CHEBI:29105"/>
    </ligand>
</feature>
<feature type="binding site" evidence="1">
    <location>
        <position position="75"/>
    </location>
    <ligand>
        <name>Fe(3+)</name>
        <dbReference type="ChEBI" id="CHEBI:29034"/>
    </ligand>
</feature>
<feature type="binding site" evidence="1">
    <location>
        <position position="75"/>
    </location>
    <ligand>
        <name>Zn(2+)</name>
        <dbReference type="ChEBI" id="CHEBI:29105"/>
    </ligand>
</feature>
<feature type="binding site" evidence="1">
    <location>
        <position position="82"/>
    </location>
    <ligand>
        <name>4-imidazolone-5-propanoate</name>
        <dbReference type="ChEBI" id="CHEBI:77893"/>
    </ligand>
</feature>
<feature type="binding site" evidence="1">
    <location>
        <position position="145"/>
    </location>
    <ligand>
        <name>4-imidazolone-5-propanoate</name>
        <dbReference type="ChEBI" id="CHEBI:77893"/>
    </ligand>
</feature>
<feature type="binding site" evidence="1">
    <location>
        <position position="145"/>
    </location>
    <ligand>
        <name>N-formimidoyl-L-glutamate</name>
        <dbReference type="ChEBI" id="CHEBI:58928"/>
    </ligand>
</feature>
<feature type="binding site" evidence="1">
    <location>
        <position position="178"/>
    </location>
    <ligand>
        <name>4-imidazolone-5-propanoate</name>
        <dbReference type="ChEBI" id="CHEBI:77893"/>
    </ligand>
</feature>
<feature type="binding site" evidence="1">
    <location>
        <position position="243"/>
    </location>
    <ligand>
        <name>Fe(3+)</name>
        <dbReference type="ChEBI" id="CHEBI:29034"/>
    </ligand>
</feature>
<feature type="binding site" evidence="1">
    <location>
        <position position="243"/>
    </location>
    <ligand>
        <name>Zn(2+)</name>
        <dbReference type="ChEBI" id="CHEBI:29105"/>
    </ligand>
</feature>
<feature type="binding site" evidence="1">
    <location>
        <position position="246"/>
    </location>
    <ligand>
        <name>4-imidazolone-5-propanoate</name>
        <dbReference type="ChEBI" id="CHEBI:77893"/>
    </ligand>
</feature>
<feature type="binding site" evidence="1">
    <location>
        <position position="318"/>
    </location>
    <ligand>
        <name>Fe(3+)</name>
        <dbReference type="ChEBI" id="CHEBI:29034"/>
    </ligand>
</feature>
<feature type="binding site" evidence="1">
    <location>
        <position position="318"/>
    </location>
    <ligand>
        <name>Zn(2+)</name>
        <dbReference type="ChEBI" id="CHEBI:29105"/>
    </ligand>
</feature>
<feature type="binding site" evidence="1">
    <location>
        <position position="320"/>
    </location>
    <ligand>
        <name>N-formimidoyl-L-glutamate</name>
        <dbReference type="ChEBI" id="CHEBI:58928"/>
    </ligand>
</feature>
<feature type="binding site" evidence="1">
    <location>
        <position position="322"/>
    </location>
    <ligand>
        <name>N-formimidoyl-L-glutamate</name>
        <dbReference type="ChEBI" id="CHEBI:58928"/>
    </ligand>
</feature>
<feature type="binding site" evidence="1">
    <location>
        <position position="323"/>
    </location>
    <ligand>
        <name>4-imidazolone-5-propanoate</name>
        <dbReference type="ChEBI" id="CHEBI:77893"/>
    </ligand>
</feature>
<dbReference type="EC" id="3.5.2.7" evidence="1"/>
<dbReference type="EMBL" id="CP000563">
    <property type="protein sequence ID" value="ABN63719.1"/>
    <property type="molecule type" value="Genomic_DNA"/>
</dbReference>
<dbReference type="RefSeq" id="WP_011848213.1">
    <property type="nucleotide sequence ID" value="NC_009052.1"/>
</dbReference>
<dbReference type="SMR" id="A3DAF6"/>
<dbReference type="STRING" id="325240.Sbal_4254"/>
<dbReference type="KEGG" id="sbl:Sbal_4254"/>
<dbReference type="HOGENOM" id="CLU_041647_0_0_6"/>
<dbReference type="OrthoDB" id="9776455at2"/>
<dbReference type="UniPathway" id="UPA00379">
    <property type="reaction ID" value="UER00551"/>
</dbReference>
<dbReference type="Proteomes" id="UP000001557">
    <property type="component" value="Chromosome"/>
</dbReference>
<dbReference type="GO" id="GO:0005737">
    <property type="term" value="C:cytoplasm"/>
    <property type="evidence" value="ECO:0007669"/>
    <property type="project" value="UniProtKB-SubCell"/>
</dbReference>
<dbReference type="GO" id="GO:0050480">
    <property type="term" value="F:imidazolonepropionase activity"/>
    <property type="evidence" value="ECO:0007669"/>
    <property type="project" value="UniProtKB-UniRule"/>
</dbReference>
<dbReference type="GO" id="GO:0005506">
    <property type="term" value="F:iron ion binding"/>
    <property type="evidence" value="ECO:0007669"/>
    <property type="project" value="UniProtKB-UniRule"/>
</dbReference>
<dbReference type="GO" id="GO:0008270">
    <property type="term" value="F:zinc ion binding"/>
    <property type="evidence" value="ECO:0007669"/>
    <property type="project" value="UniProtKB-UniRule"/>
</dbReference>
<dbReference type="GO" id="GO:0019556">
    <property type="term" value="P:L-histidine catabolic process to glutamate and formamide"/>
    <property type="evidence" value="ECO:0007669"/>
    <property type="project" value="UniProtKB-UniPathway"/>
</dbReference>
<dbReference type="GO" id="GO:0019557">
    <property type="term" value="P:L-histidine catabolic process to glutamate and formate"/>
    <property type="evidence" value="ECO:0007669"/>
    <property type="project" value="UniProtKB-UniPathway"/>
</dbReference>
<dbReference type="CDD" id="cd01296">
    <property type="entry name" value="Imidazolone-5PH"/>
    <property type="match status" value="1"/>
</dbReference>
<dbReference type="FunFam" id="3.20.20.140:FF:000007">
    <property type="entry name" value="Imidazolonepropionase"/>
    <property type="match status" value="1"/>
</dbReference>
<dbReference type="Gene3D" id="3.20.20.140">
    <property type="entry name" value="Metal-dependent hydrolases"/>
    <property type="match status" value="1"/>
</dbReference>
<dbReference type="Gene3D" id="2.30.40.10">
    <property type="entry name" value="Urease, subunit C, domain 1"/>
    <property type="match status" value="1"/>
</dbReference>
<dbReference type="HAMAP" id="MF_00372">
    <property type="entry name" value="HutI"/>
    <property type="match status" value="1"/>
</dbReference>
<dbReference type="InterPro" id="IPR006680">
    <property type="entry name" value="Amidohydro-rel"/>
</dbReference>
<dbReference type="InterPro" id="IPR005920">
    <property type="entry name" value="HutI"/>
</dbReference>
<dbReference type="InterPro" id="IPR011059">
    <property type="entry name" value="Metal-dep_hydrolase_composite"/>
</dbReference>
<dbReference type="InterPro" id="IPR032466">
    <property type="entry name" value="Metal_Hydrolase"/>
</dbReference>
<dbReference type="NCBIfam" id="TIGR01224">
    <property type="entry name" value="hutI"/>
    <property type="match status" value="1"/>
</dbReference>
<dbReference type="PANTHER" id="PTHR42752">
    <property type="entry name" value="IMIDAZOLONEPROPIONASE"/>
    <property type="match status" value="1"/>
</dbReference>
<dbReference type="PANTHER" id="PTHR42752:SF1">
    <property type="entry name" value="IMIDAZOLONEPROPIONASE-RELATED"/>
    <property type="match status" value="1"/>
</dbReference>
<dbReference type="Pfam" id="PF01979">
    <property type="entry name" value="Amidohydro_1"/>
    <property type="match status" value="1"/>
</dbReference>
<dbReference type="SUPFAM" id="SSF51338">
    <property type="entry name" value="Composite domain of metallo-dependent hydrolases"/>
    <property type="match status" value="1"/>
</dbReference>
<dbReference type="SUPFAM" id="SSF51556">
    <property type="entry name" value="Metallo-dependent hydrolases"/>
    <property type="match status" value="1"/>
</dbReference>
<proteinExistence type="inferred from homology"/>
<protein>
    <recommendedName>
        <fullName evidence="1">Imidazolonepropionase</fullName>
        <ecNumber evidence="1">3.5.2.7</ecNumber>
    </recommendedName>
    <alternativeName>
        <fullName evidence="1">Imidazolone-5-propionate hydrolase</fullName>
    </alternativeName>
</protein>
<accession>A3DAF6</accession>
<reference key="1">
    <citation type="submission" date="2007-02" db="EMBL/GenBank/DDBJ databases">
        <title>Complete sequence of chromosome of Shewanella baltica OS155.</title>
        <authorList>
            <consortium name="US DOE Joint Genome Institute"/>
            <person name="Copeland A."/>
            <person name="Lucas S."/>
            <person name="Lapidus A."/>
            <person name="Barry K."/>
            <person name="Detter J.C."/>
            <person name="Glavina del Rio T."/>
            <person name="Hammon N."/>
            <person name="Israni S."/>
            <person name="Dalin E."/>
            <person name="Tice H."/>
            <person name="Pitluck S."/>
            <person name="Sims D.R."/>
            <person name="Brettin T."/>
            <person name="Bruce D."/>
            <person name="Han C."/>
            <person name="Tapia R."/>
            <person name="Brainard J."/>
            <person name="Schmutz J."/>
            <person name="Larimer F."/>
            <person name="Land M."/>
            <person name="Hauser L."/>
            <person name="Kyrpides N."/>
            <person name="Mikhailova N."/>
            <person name="Brettar I."/>
            <person name="Klappenbach J."/>
            <person name="Konstantinidis K."/>
            <person name="Rodrigues J."/>
            <person name="Tiedje J."/>
            <person name="Richardson P."/>
        </authorList>
    </citation>
    <scope>NUCLEOTIDE SEQUENCE [LARGE SCALE GENOMIC DNA]</scope>
    <source>
        <strain>OS155 / ATCC BAA-1091</strain>
    </source>
</reference>
<gene>
    <name evidence="1" type="primary">hutI</name>
    <name type="ordered locus">Sbal_4254</name>
</gene>
<name>HUTI_SHEB5</name>